<dbReference type="EMBL" id="AM295007">
    <property type="protein sequence ID" value="CAM30846.1"/>
    <property type="molecule type" value="Genomic_DNA"/>
</dbReference>
<dbReference type="RefSeq" id="WP_002985838.1">
    <property type="nucleotide sequence ID" value="NC_009332.1"/>
</dbReference>
<dbReference type="SMR" id="A2RG67"/>
<dbReference type="GeneID" id="69901336"/>
<dbReference type="KEGG" id="spf:SpyM51525"/>
<dbReference type="HOGENOM" id="CLU_157169_0_0_9"/>
<dbReference type="GO" id="GO:0009295">
    <property type="term" value="C:nucleoid"/>
    <property type="evidence" value="ECO:0007669"/>
    <property type="project" value="UniProtKB-SubCell"/>
</dbReference>
<dbReference type="GO" id="GO:0006260">
    <property type="term" value="P:DNA replication"/>
    <property type="evidence" value="ECO:0007669"/>
    <property type="project" value="UniProtKB-UniRule"/>
</dbReference>
<dbReference type="HAMAP" id="MF_01159">
    <property type="entry name" value="YabA"/>
    <property type="match status" value="1"/>
</dbReference>
<dbReference type="InterPro" id="IPR010377">
    <property type="entry name" value="YabA"/>
</dbReference>
<dbReference type="NCBIfam" id="NF009640">
    <property type="entry name" value="PRK13169.1-1"/>
    <property type="match status" value="1"/>
</dbReference>
<dbReference type="Pfam" id="PF06156">
    <property type="entry name" value="YabA"/>
    <property type="match status" value="1"/>
</dbReference>
<dbReference type="PIRSF" id="PIRSF021439">
    <property type="entry name" value="DUF972"/>
    <property type="match status" value="1"/>
</dbReference>
<comment type="function">
    <text evidence="1">Involved in control of chromosome replication initiation. Inhibits the cooperative binding of DnaA to the oriC region, thus negatively regulating initiation of chromosome replication. Inhibits the ability of DnaA-ATP to form a helix on DNA; does not disassemble preformed DnaA-DNA helices. Decreases the residence time of DnaA on the chromosome at its binding sites (oriC, replication forks and promoter-binding sites). Tethers DnaA to the replication machinery via the DNA polymerase beta sliding clamp subunit (dnaN). Associates with oriC and other DnaA targets on the chromosome in a DnaA-dependent manner.</text>
</comment>
<comment type="cofactor">
    <cofactor evidence="1">
        <name>Zn(2+)</name>
        <dbReference type="ChEBI" id="CHEBI:29105"/>
    </cofactor>
    <text evidence="1">Binds 1 zinc ion per subunit.</text>
</comment>
<comment type="subunit">
    <text evidence="1">Homotetramer. Interacts with both DnaA and DnaN, acting as a bridge between these two proteins.</text>
</comment>
<comment type="subcellular location">
    <subcellularLocation>
        <location evidence="1">Cytoplasm</location>
        <location evidence="1">Nucleoid</location>
    </subcellularLocation>
    <text evidence="1">Localizes in tight foci, which correspond to the replisome at mid-cell throughout the cell cycle.</text>
</comment>
<comment type="similarity">
    <text evidence="1">Belongs to the YabA family.</text>
</comment>
<name>YABA_STRPG</name>
<proteinExistence type="inferred from homology"/>
<evidence type="ECO:0000255" key="1">
    <source>
        <dbReference type="HAMAP-Rule" id="MF_01159"/>
    </source>
</evidence>
<organism>
    <name type="scientific">Streptococcus pyogenes serotype M5 (strain Manfredo)</name>
    <dbReference type="NCBI Taxonomy" id="160491"/>
    <lineage>
        <taxon>Bacteria</taxon>
        <taxon>Bacillati</taxon>
        <taxon>Bacillota</taxon>
        <taxon>Bacilli</taxon>
        <taxon>Lactobacillales</taxon>
        <taxon>Streptococcaceae</taxon>
        <taxon>Streptococcus</taxon>
    </lineage>
</organism>
<feature type="chain" id="PRO_1000065591" description="Replication initiation control protein YabA">
    <location>
        <begin position="1"/>
        <end position="107"/>
    </location>
</feature>
<feature type="binding site" evidence="1">
    <location>
        <position position="81"/>
    </location>
    <ligand>
        <name>Zn(2+)</name>
        <dbReference type="ChEBI" id="CHEBI:29105"/>
    </ligand>
</feature>
<feature type="binding site" evidence="1">
    <location>
        <position position="83"/>
    </location>
    <ligand>
        <name>Zn(2+)</name>
        <dbReference type="ChEBI" id="CHEBI:29105"/>
    </ligand>
</feature>
<feature type="binding site" evidence="1">
    <location>
        <position position="97"/>
    </location>
    <ligand>
        <name>Zn(2+)</name>
        <dbReference type="ChEBI" id="CHEBI:29105"/>
    </ligand>
</feature>
<feature type="binding site" evidence="1">
    <location>
        <position position="100"/>
    </location>
    <ligand>
        <name>Zn(2+)</name>
        <dbReference type="ChEBI" id="CHEBI:29105"/>
    </ligand>
</feature>
<reference key="1">
    <citation type="journal article" date="2007" name="J. Bacteriol.">
        <title>Complete genome of acute rheumatic fever-associated serotype M5 Streptococcus pyogenes strain Manfredo.</title>
        <authorList>
            <person name="Holden M.T.G."/>
            <person name="Scott A."/>
            <person name="Cherevach I."/>
            <person name="Chillingworth T."/>
            <person name="Churcher C."/>
            <person name="Cronin A."/>
            <person name="Dowd L."/>
            <person name="Feltwell T."/>
            <person name="Hamlin N."/>
            <person name="Holroyd S."/>
            <person name="Jagels K."/>
            <person name="Moule S."/>
            <person name="Mungall K."/>
            <person name="Quail M.A."/>
            <person name="Price C."/>
            <person name="Rabbinowitsch E."/>
            <person name="Sharp S."/>
            <person name="Skelton J."/>
            <person name="Whitehead S."/>
            <person name="Barrell B.G."/>
            <person name="Kehoe M."/>
            <person name="Parkhill J."/>
        </authorList>
    </citation>
    <scope>NUCLEOTIDE SEQUENCE [LARGE SCALE GENOMIC DNA]</scope>
    <source>
        <strain>Manfredo</strain>
    </source>
</reference>
<protein>
    <recommendedName>
        <fullName evidence="1">Replication initiation control protein YabA</fullName>
    </recommendedName>
</protein>
<accession>A2RG67</accession>
<gene>
    <name evidence="1" type="primary">yabA</name>
    <name type="ordered locus">SpyM51525</name>
</gene>
<sequence>MNKKELFDAFDGFSQNLMVTLAEIEAMKKQVQSLVEENTILRLENTKLRERLSHLEHETVAKNPSKQRKDHLEGIYDEGFHICNFFYGQRRENDEECMFCRELLDRK</sequence>
<keyword id="KW-0963">Cytoplasm</keyword>
<keyword id="KW-0235">DNA replication</keyword>
<keyword id="KW-0236">DNA replication inhibitor</keyword>
<keyword id="KW-0479">Metal-binding</keyword>
<keyword id="KW-0862">Zinc</keyword>